<feature type="chain" id="PRO_0000115946" description="Tripartite terminase subunit 3">
    <location>
        <begin position="1"/>
        <end position="690"/>
    </location>
</feature>
<feature type="short sequence motif" description="Walker A motif" evidence="1">
    <location>
        <begin position="226"/>
        <end position="233"/>
    </location>
</feature>
<feature type="short sequence motif" description="Walker B motif" evidence="1">
    <location>
        <begin position="321"/>
        <end position="326"/>
    </location>
</feature>
<feature type="active site" description="For ATPase activity" evidence="1">
    <location>
        <position position="326"/>
    </location>
</feature>
<feature type="active site" description="For nuclease activity" evidence="1">
    <location>
        <position position="481"/>
    </location>
</feature>
<feature type="active site" description="For nuclease activity" evidence="1">
    <location>
        <position position="555"/>
    </location>
</feature>
<feature type="active site" description="For nuclease activity" evidence="1">
    <location>
        <position position="667"/>
    </location>
</feature>
<organismHost>
    <name type="scientific">Homo sapiens</name>
    <name type="common">Human</name>
    <dbReference type="NCBI Taxonomy" id="9606"/>
</organismHost>
<sequence>MLYASQRGRLTENLRNALQQDSTTQGCLGAETPSIMYTGAKSDRWAHPLVGTIHASNLYCPMLRAYCRHYGPRPVFVASDESLPMFGASPALHTPVQVQMCLLPELRDTLQRLLPPPNLEDSEALTEFKTSVSSARAILEDPNFLEMREFVTSLASFLSGQYKHKPARLEAFQKQVVLHSFYFLISIKSLEITDTMFDIFQSAFGLEEMTLEKLHIFKQKASVFLIPRRHGKTWIVVAIISLILSNLSNVQIGYVAHQKHVASAVFTEIIDTLTKSFDSKRVEVNKETSTITFRHSGKISSTVMCATCFNKNSIRGQTFHLLFVDEANFIKKEALPAILGFMLQKDAKIIFISSVNSADQATSFLYKLKDAQERLLNVVSYVCQEHRQDFDMQDSMVSCPCFRLHIPSYITMDSNIRATTNLFLDGAFSTELMGDTSSLSQGSLSRTVRDDAINQLELCRVDTLNPRVAGRLASSLYVYVDPAYTNNTSASGTGIAAVTHDRADPNRVIVLGLEHFFLKDLTGDAALQIATCVVALVSSIVTLHPHLEEVKVAVEGNSSQDSAVAIASIIGESCPLPCAFVHTKDKTSSLQWPMYLLTNEKSKAFERLIYAVNTASLSASQVTVSNTIQLSFDPVLYLISQIRAIKPIPLRDGTYTYTGKQRNLSDDVLVALVMAHFLATTQKHTFKKVH</sequence>
<protein>
    <recommendedName>
        <fullName evidence="1">Tripartite terminase subunit 3</fullName>
        <ecNumber evidence="1">3.1.-.-</ecNumber>
    </recommendedName>
    <alternativeName>
        <fullName evidence="1">Terminase large subunit</fullName>
    </alternativeName>
</protein>
<evidence type="ECO:0000255" key="1">
    <source>
        <dbReference type="HAMAP-Rule" id="MF_04013"/>
    </source>
</evidence>
<evidence type="ECO:0000305" key="2"/>
<evidence type="ECO:0000305" key="3">
    <source>
    </source>
</evidence>
<keyword id="KW-0238">DNA-binding</keyword>
<keyword id="KW-1048">Host nucleus</keyword>
<keyword id="KW-0378">Hydrolase</keyword>
<keyword id="KW-1185">Reference proteome</keyword>
<keyword id="KW-0231">Viral genome packaging</keyword>
<keyword id="KW-1188">Viral release from host cell</keyword>
<proteinExistence type="evidence at protein level"/>
<comment type="function">
    <text evidence="1 3">Component of the molecular motor that translocates viral genomic DNA in empty capsid during DNA packaging (Probable). Forms a tripartite terminase complex together with TRM1 and TRM2 in the host cytoplasm. Once the complex reaches the host nucleus, it interacts with the capsid portal vertex. This portal forms a ring in which genomic DNA is translocated into the capsid. TRM3 carries an RNase H-like nuclease activity that plays an important role for the cleavage of concatemeric viral DNA into unit length genomes.</text>
</comment>
<comment type="subunit">
    <text evidence="1">Interacts with the terminase subunits TRM1 and TRM2. Interacts with portal protein.</text>
</comment>
<comment type="interaction">
    <interactant intactId="EBI-9644804">
        <id>P03219</id>
    </interactant>
    <interactant intactId="EBI-9644838">
        <id>Q1HVD3</id>
        <label>BTRF1</label>
    </interactant>
    <organismsDiffer>true</organismsDiffer>
    <experiments>3</experiments>
</comment>
<comment type="subcellular location">
    <subcellularLocation>
        <location evidence="1">Host nucleus</location>
    </subcellularLocation>
    <text evidence="1">Responsible for the nuclear localization of the two others subunits TRM1 and TRM2.</text>
</comment>
<comment type="similarity">
    <text evidence="1">Belongs to the herpesviridae TRM3 protein family.</text>
</comment>
<comment type="caution">
    <text evidence="2">Be careful of the possible confusion between BDRF1 with BdRF1.</text>
</comment>
<name>TRM3_EBVB9</name>
<dbReference type="EC" id="3.1.-.-" evidence="1"/>
<dbReference type="EMBL" id="V01555">
    <property type="protein sequence ID" value="CAA24829.1"/>
    <property type="status" value="ALT_SEQ"/>
    <property type="molecule type" value="Genomic_DNA"/>
</dbReference>
<dbReference type="EMBL" id="V01555">
    <property type="protein sequence ID" value="CAA24834.1"/>
    <property type="molecule type" value="Genomic_DNA"/>
</dbReference>
<dbReference type="EMBL" id="AJ507799">
    <property type="protein sequence ID" value="CAD53440.1"/>
    <property type="molecule type" value="Genomic_DNA"/>
</dbReference>
<dbReference type="PIR" id="A43044">
    <property type="entry name" value="QQBE38"/>
</dbReference>
<dbReference type="RefSeq" id="YP_401690.1">
    <property type="nucleotide sequence ID" value="NC_007605.1"/>
</dbReference>
<dbReference type="SMR" id="P03219"/>
<dbReference type="BioGRID" id="3509104">
    <property type="interactions" value="3"/>
</dbReference>
<dbReference type="IntAct" id="P03219">
    <property type="interactions" value="26"/>
</dbReference>
<dbReference type="MINT" id="P03219"/>
<dbReference type="DNASU" id="3783767"/>
<dbReference type="GeneID" id="3783767"/>
<dbReference type="KEGG" id="vg:3783767"/>
<dbReference type="Proteomes" id="UP000153037">
    <property type="component" value="Segment"/>
</dbReference>
<dbReference type="GO" id="GO:0042025">
    <property type="term" value="C:host cell nucleus"/>
    <property type="evidence" value="ECO:0007669"/>
    <property type="project" value="UniProtKB-SubCell"/>
</dbReference>
<dbReference type="GO" id="GO:0003677">
    <property type="term" value="F:DNA binding"/>
    <property type="evidence" value="ECO:0007669"/>
    <property type="project" value="UniProtKB-KW"/>
</dbReference>
<dbReference type="GO" id="GO:0016787">
    <property type="term" value="F:hydrolase activity"/>
    <property type="evidence" value="ECO:0007669"/>
    <property type="project" value="UniProtKB-KW"/>
</dbReference>
<dbReference type="GO" id="GO:0051276">
    <property type="term" value="P:chromosome organization"/>
    <property type="evidence" value="ECO:0007669"/>
    <property type="project" value="InterPro"/>
</dbReference>
<dbReference type="Gene3D" id="3.30.420.320">
    <property type="match status" value="1"/>
</dbReference>
<dbReference type="Gene3D" id="3.40.50.300">
    <property type="entry name" value="P-loop containing nucleotide triphosphate hydrolases"/>
    <property type="match status" value="1"/>
</dbReference>
<dbReference type="HAMAP" id="MF_04013">
    <property type="entry name" value="HSV_TRM3"/>
    <property type="match status" value="1"/>
</dbReference>
<dbReference type="InterPro" id="IPR003498">
    <property type="entry name" value="DNA_pack_C"/>
</dbReference>
<dbReference type="InterPro" id="IPR038435">
    <property type="entry name" value="DNA_pack_C_sf"/>
</dbReference>
<dbReference type="InterPro" id="IPR003499">
    <property type="entry name" value="DNA_pack_N"/>
</dbReference>
<dbReference type="InterPro" id="IPR033663">
    <property type="entry name" value="HSV_TRM3"/>
</dbReference>
<dbReference type="InterPro" id="IPR027417">
    <property type="entry name" value="P-loop_NTPase"/>
</dbReference>
<dbReference type="Pfam" id="PF02499">
    <property type="entry name" value="DNA_pack_C"/>
    <property type="match status" value="1"/>
</dbReference>
<dbReference type="Pfam" id="PF02500">
    <property type="entry name" value="DNA_pack_N"/>
    <property type="match status" value="1"/>
</dbReference>
<reference key="1">
    <citation type="journal article" date="1984" name="Nature">
        <title>DNA sequence and expression of the B95-8 Epstein-Barr virus genome.</title>
        <authorList>
            <person name="Baer R."/>
            <person name="Bankier A.T."/>
            <person name="Biggin M.D."/>
            <person name="Deininger P.L."/>
            <person name="Farrell P.J."/>
            <person name="Gibson T.J."/>
            <person name="Hatfull G."/>
            <person name="Hudson G.S."/>
            <person name="Satchwell S.C."/>
            <person name="Seguin C."/>
            <person name="Tuffnell P.S."/>
            <person name="Barrell B.G."/>
        </authorList>
    </citation>
    <scope>NUCLEOTIDE SEQUENCE [LARGE SCALE GENOMIC DNA]</scope>
</reference>
<reference key="2">
    <citation type="journal article" date="2003" name="Virology">
        <title>Updated Epstein-Barr virus (EBV) DNA sequence and analysis of a promoter for the BART (CST, BARF0) RNAs of EBV.</title>
        <authorList>
            <person name="de Jesus O."/>
            <person name="Smith P.R."/>
            <person name="Spender L.C."/>
            <person name="Elgueta Karstegl C."/>
            <person name="Niller H.H."/>
            <person name="Huang D."/>
            <person name="Farrell P.J."/>
        </authorList>
    </citation>
    <scope>GENOME REANNOTATION</scope>
</reference>
<reference key="3">
    <citation type="journal article" date="2013" name="J. Virol.">
        <title>An Epstein-Barr virus mutant produces immunogenic defective particles devoid of viral DNA.</title>
        <authorList>
            <person name="Pavlova S."/>
            <person name="Feederle R."/>
            <person name="Gaertner K."/>
            <person name="Fuchs W."/>
            <person name="Granzow H."/>
            <person name="Delecluse H.J."/>
        </authorList>
    </citation>
    <scope>FUNCTION</scope>
</reference>
<accession>P03219</accession>
<accession>Q777C9</accession>
<gene>
    <name evidence="1" type="primary">TRM3</name>
    <name type="ORF">BGRF1/BDRF1</name>
</gene>
<organism>
    <name type="scientific">Epstein-Barr virus (strain B95-8)</name>
    <name type="common">HHV-4</name>
    <name type="synonym">Human herpesvirus 4</name>
    <dbReference type="NCBI Taxonomy" id="10377"/>
    <lineage>
        <taxon>Viruses</taxon>
        <taxon>Duplodnaviria</taxon>
        <taxon>Heunggongvirae</taxon>
        <taxon>Peploviricota</taxon>
        <taxon>Herviviricetes</taxon>
        <taxon>Herpesvirales</taxon>
        <taxon>Orthoherpesviridae</taxon>
        <taxon>Gammaherpesvirinae</taxon>
        <taxon>Lymphocryptovirus</taxon>
        <taxon>Lymphocryptovirus humangamma4</taxon>
        <taxon>Epstein-Barr virus (strain GD1)</taxon>
    </lineage>
</organism>